<keyword id="KW-0997">Cell inner membrane</keyword>
<keyword id="KW-1003">Cell membrane</keyword>
<keyword id="KW-0472">Membrane</keyword>
<keyword id="KW-1185">Reference proteome</keyword>
<keyword id="KW-0808">Transferase</keyword>
<keyword id="KW-0812">Transmembrane</keyword>
<keyword id="KW-1133">Transmembrane helix</keyword>
<reference key="1">
    <citation type="submission" date="2003-03" db="EMBL/GenBank/DDBJ databases">
        <title>The complete genome sequence of Neisseria gonorrhoeae.</title>
        <authorList>
            <person name="Lewis L.A."/>
            <person name="Gillaspy A.F."/>
            <person name="McLaughlin R.E."/>
            <person name="Gipson M."/>
            <person name="Ducey T.F."/>
            <person name="Ownbey T."/>
            <person name="Hartman K."/>
            <person name="Nydick C."/>
            <person name="Carson M.B."/>
            <person name="Vaughn J."/>
            <person name="Thomson C."/>
            <person name="Song L."/>
            <person name="Lin S."/>
            <person name="Yuan X."/>
            <person name="Najar F."/>
            <person name="Zhan M."/>
            <person name="Ren Q."/>
            <person name="Zhu H."/>
            <person name="Qi S."/>
            <person name="Kenton S.M."/>
            <person name="Lai H."/>
            <person name="White J.D."/>
            <person name="Clifton S."/>
            <person name="Roe B.A."/>
            <person name="Dyer D.W."/>
        </authorList>
    </citation>
    <scope>NUCLEOTIDE SEQUENCE [LARGE SCALE GENOMIC DNA]</scope>
    <source>
        <strain>ATCC 700825 / FA 1090</strain>
    </source>
</reference>
<dbReference type="EC" id="2.5.1.145" evidence="1"/>
<dbReference type="EMBL" id="AE004969">
    <property type="protein sequence ID" value="AAW89551.1"/>
    <property type="molecule type" value="Genomic_DNA"/>
</dbReference>
<dbReference type="RefSeq" id="WP_003688557.1">
    <property type="nucleotide sequence ID" value="NC_002946.2"/>
</dbReference>
<dbReference type="RefSeq" id="YP_207963.1">
    <property type="nucleotide sequence ID" value="NC_002946.2"/>
</dbReference>
<dbReference type="SMR" id="Q5F8D6"/>
<dbReference type="STRING" id="242231.NGO_0846"/>
<dbReference type="GeneID" id="66753177"/>
<dbReference type="KEGG" id="ngo:NGO_0846"/>
<dbReference type="PATRIC" id="fig|242231.10.peg.1000"/>
<dbReference type="HOGENOM" id="CLU_013386_1_0_4"/>
<dbReference type="UniPathway" id="UPA00664"/>
<dbReference type="Proteomes" id="UP000000535">
    <property type="component" value="Chromosome"/>
</dbReference>
<dbReference type="GO" id="GO:0005886">
    <property type="term" value="C:plasma membrane"/>
    <property type="evidence" value="ECO:0007669"/>
    <property type="project" value="UniProtKB-SubCell"/>
</dbReference>
<dbReference type="GO" id="GO:0008961">
    <property type="term" value="F:phosphatidylglycerol-prolipoprotein diacylglyceryl transferase activity"/>
    <property type="evidence" value="ECO:0007669"/>
    <property type="project" value="UniProtKB-UniRule"/>
</dbReference>
<dbReference type="GO" id="GO:0042158">
    <property type="term" value="P:lipoprotein biosynthetic process"/>
    <property type="evidence" value="ECO:0007669"/>
    <property type="project" value="UniProtKB-UniRule"/>
</dbReference>
<dbReference type="HAMAP" id="MF_01147">
    <property type="entry name" value="Lgt"/>
    <property type="match status" value="1"/>
</dbReference>
<dbReference type="InterPro" id="IPR001640">
    <property type="entry name" value="Lgt"/>
</dbReference>
<dbReference type="NCBIfam" id="TIGR00544">
    <property type="entry name" value="lgt"/>
    <property type="match status" value="1"/>
</dbReference>
<dbReference type="PANTHER" id="PTHR30589:SF0">
    <property type="entry name" value="PHOSPHATIDYLGLYCEROL--PROLIPOPROTEIN DIACYLGLYCERYL TRANSFERASE"/>
    <property type="match status" value="1"/>
</dbReference>
<dbReference type="PANTHER" id="PTHR30589">
    <property type="entry name" value="PROLIPOPROTEIN DIACYLGLYCERYL TRANSFERASE"/>
    <property type="match status" value="1"/>
</dbReference>
<dbReference type="Pfam" id="PF01790">
    <property type="entry name" value="LGT"/>
    <property type="match status" value="1"/>
</dbReference>
<dbReference type="PROSITE" id="PS01311">
    <property type="entry name" value="LGT"/>
    <property type="match status" value="1"/>
</dbReference>
<protein>
    <recommendedName>
        <fullName evidence="1">Phosphatidylglycerol--prolipoprotein diacylglyceryl transferase</fullName>
        <ecNumber evidence="1">2.5.1.145</ecNumber>
    </recommendedName>
</protein>
<organism>
    <name type="scientific">Neisseria gonorrhoeae (strain ATCC 700825 / FA 1090)</name>
    <dbReference type="NCBI Taxonomy" id="242231"/>
    <lineage>
        <taxon>Bacteria</taxon>
        <taxon>Pseudomonadati</taxon>
        <taxon>Pseudomonadota</taxon>
        <taxon>Betaproteobacteria</taxon>
        <taxon>Neisseriales</taxon>
        <taxon>Neisseriaceae</taxon>
        <taxon>Neisseria</taxon>
    </lineage>
</organism>
<name>LGT_NEIG1</name>
<evidence type="ECO:0000255" key="1">
    <source>
        <dbReference type="HAMAP-Rule" id="MF_01147"/>
    </source>
</evidence>
<accession>Q5F8D6</accession>
<proteinExistence type="inferred from homology"/>
<comment type="function">
    <text evidence="1">Catalyzes the transfer of the diacylglyceryl group from phosphatidylglycerol to the sulfhydryl group of the N-terminal cysteine of a prolipoprotein, the first step in the formation of mature lipoproteins.</text>
</comment>
<comment type="catalytic activity">
    <reaction evidence="1">
        <text>L-cysteinyl-[prolipoprotein] + a 1,2-diacyl-sn-glycero-3-phospho-(1'-sn-glycerol) = an S-1,2-diacyl-sn-glyceryl-L-cysteinyl-[prolipoprotein] + sn-glycerol 1-phosphate + H(+)</text>
        <dbReference type="Rhea" id="RHEA:56712"/>
        <dbReference type="Rhea" id="RHEA-COMP:14679"/>
        <dbReference type="Rhea" id="RHEA-COMP:14680"/>
        <dbReference type="ChEBI" id="CHEBI:15378"/>
        <dbReference type="ChEBI" id="CHEBI:29950"/>
        <dbReference type="ChEBI" id="CHEBI:57685"/>
        <dbReference type="ChEBI" id="CHEBI:64716"/>
        <dbReference type="ChEBI" id="CHEBI:140658"/>
        <dbReference type="EC" id="2.5.1.145"/>
    </reaction>
</comment>
<comment type="pathway">
    <text evidence="1">Protein modification; lipoprotein biosynthesis (diacylglyceryl transfer).</text>
</comment>
<comment type="subcellular location">
    <subcellularLocation>
        <location evidence="1">Cell inner membrane</location>
        <topology evidence="1">Multi-pass membrane protein</topology>
    </subcellularLocation>
</comment>
<comment type="similarity">
    <text evidence="1">Belongs to the Lgt family.</text>
</comment>
<sequence>MIIHHQFDPVLISIGPLAVRWYALSYILGFILFTFLGRRRIAQGLSVFTKESLDDFLTWGILGVILGGRLGYVLFYKFSDYLAHPLDIFKVWEGGMSFHGGFLGVVIAIWLFSRKHGIGFLKLMDTVAPLVPLGLASGRIGNFINGELWGRITDINAFWAMGFPQAHYEDAEAAAHNPLWAEWLQQYGMLPRHPSQLYQFALEGICLFAVVWLFSKKPRPTGQTAALFLGGYGVFRFIAEFARQPDDYLGLLTLGLSMGQWLSVPMIVLGIVGFVRFGMKKQH</sequence>
<gene>
    <name evidence="1" type="primary">lgt</name>
    <name type="ordered locus">NGO_0846</name>
</gene>
<feature type="chain" id="PRO_1000053457" description="Phosphatidylglycerol--prolipoprotein diacylglyceryl transferase">
    <location>
        <begin position="1"/>
        <end position="283"/>
    </location>
</feature>
<feature type="transmembrane region" description="Helical" evidence="1">
    <location>
        <begin position="17"/>
        <end position="37"/>
    </location>
</feature>
<feature type="transmembrane region" description="Helical" evidence="1">
    <location>
        <begin position="56"/>
        <end position="76"/>
    </location>
</feature>
<feature type="transmembrane region" description="Helical" evidence="1">
    <location>
        <begin position="92"/>
        <end position="112"/>
    </location>
</feature>
<feature type="transmembrane region" description="Helical" evidence="1">
    <location>
        <begin position="222"/>
        <end position="242"/>
    </location>
</feature>
<feature type="transmembrane region" description="Helical" evidence="1">
    <location>
        <begin position="255"/>
        <end position="275"/>
    </location>
</feature>
<feature type="binding site" evidence="1">
    <location>
        <position position="139"/>
    </location>
    <ligand>
        <name>a 1,2-diacyl-sn-glycero-3-phospho-(1'-sn-glycerol)</name>
        <dbReference type="ChEBI" id="CHEBI:64716"/>
    </ligand>
</feature>